<accession>P25170</accession>
<feature type="chain" id="PRO_0000056863" description="Multifunctional tryptophan biosynthesis protein">
    <location>
        <begin position="1"/>
        <end position="788"/>
    </location>
</feature>
<feature type="domain" description="Glutamine amidotransferase type-1">
    <location>
        <begin position="12"/>
        <end position="207"/>
    </location>
</feature>
<feature type="region of interest" description="Indole-3-glycerol phosphate synthase">
    <location>
        <begin position="238"/>
        <end position="503"/>
    </location>
</feature>
<feature type="region of interest" description="N-(5'-phosphoribosyl)anthranilate isomerase">
    <location>
        <begin position="520"/>
        <end position="788"/>
    </location>
</feature>
<feature type="active site" description="Nucleophile; for GATase activity" evidence="2">
    <location>
        <position position="91"/>
    </location>
</feature>
<feature type="active site" description="For GATase activity" evidence="1">
    <location>
        <position position="181"/>
    </location>
</feature>
<feature type="active site" description="For GATase activity" evidence="1">
    <location>
        <position position="183"/>
    </location>
</feature>
<feature type="binding site" evidence="2">
    <location>
        <begin position="63"/>
        <end position="65"/>
    </location>
    <ligand>
        <name>L-glutamine</name>
        <dbReference type="ChEBI" id="CHEBI:58359"/>
    </ligand>
</feature>
<feature type="binding site" evidence="2">
    <location>
        <begin position="141"/>
        <end position="142"/>
    </location>
    <ligand>
        <name>L-glutamine</name>
        <dbReference type="ChEBI" id="CHEBI:58359"/>
    </ligand>
</feature>
<evidence type="ECO:0000250" key="1"/>
<evidence type="ECO:0000250" key="2">
    <source>
        <dbReference type="UniProtKB" id="P00900"/>
    </source>
</evidence>
<protein>
    <recommendedName>
        <fullName>Multifunctional tryptophan biosynthesis protein</fullName>
    </recommendedName>
    <domain>
        <recommendedName>
            <fullName>Anthranilate synthase component 2</fullName>
            <shortName>AS</shortName>
            <ecNumber>4.1.3.27</ecNumber>
        </recommendedName>
        <alternativeName>
            <fullName>Anthranilate synthase, glutamine amidotransferase component</fullName>
        </alternativeName>
    </domain>
    <domain>
        <recommendedName>
            <fullName>Indole-3-glycerol phosphate synthase</fullName>
            <shortName>IGPS</shortName>
            <ecNumber>4.1.1.48</ecNumber>
        </recommendedName>
    </domain>
    <domain>
        <recommendedName>
            <fullName>N-(5'-phosphoribosyl)anthranilate isomerase</fullName>
            <shortName>PRAI</shortName>
            <ecNumber>5.3.1.24</ecNumber>
        </recommendedName>
    </domain>
</protein>
<name>TRPG_PHACH</name>
<reference key="1">
    <citation type="journal article" date="1991" name="Mol. Microbiol.">
        <title>The trpC gene of Phanerochaete chrysosporium is unique in containing an intron but nevertheless maintains the order of functional domains seen in other fungi.</title>
        <authorList>
            <person name="Schrank A."/>
            <person name="Tempelaars C."/>
            <person name="Sims P.F.G."/>
            <person name="Oliver S.G."/>
            <person name="Broda P."/>
        </authorList>
    </citation>
    <scope>NUCLEOTIDE SEQUENCE [GENOMIC DNA]</scope>
    <source>
        <strain>ATCC 34541 / NBRC 31249 / ME-446 / PRL 2750</strain>
    </source>
</reference>
<sequence length="788" mass="85345">MSLPPHLCVPIDILMIDNFDSFTWNLYQSLCLLGADVTVIRNDAIPRSAIPQLRIKRLIVSPGPGHPQTDSGISREAIKYFAGKVPIMGVCMGLECVVDVFGGQIAYAGEIMHGKVSGIRHDARGCFKDLPQGIQSTRYHSLSAGVKTLPDELAVTAVTEHERVIMGIRHRKYTVEAVQYHPESILSESGDDLLRHFMKLKGGTWEENPEFRVLDPSLPAFEIGSQPAASTSAKIPTILEKICAQRQKDVDQAKATPGTTPEDLKTLLSMKLSPPQISFPDRLKAAEVKPALMAEVKRASPSKGPIAMNGNAAQQALTYALAGASVISVLTEPTWFKGSLLDMRLARQAIDNLPHRPAILRKDFIIDEYQIDEARLHGADTVLLIVATLTEKRLEELYAYSQSLGMEPLVEVNNAKEMEIALKLGAKVIGVNNRNLHDFNVDMGTTSRLAEMVRERDVILCALSGIKDAQDVNTYVEQGVGAVLVGESLMRAPDTRAFIRQLLSIPESEAKGKGKETTPLSRSCGIRTEEEALAAAEAGADMLGLMFVPKSKRYVSLEKAQQIAAAIHSRRLSKPVLTSGKTLENEPWFTAQQPPSRSFVWRFAARPLLVGVFQNQPLSVYLTPCVPQLDLVQLHGSEPAELAKHYPVPVIRVFHVSADGRGLADLARPGLHQFALLDAVLPGSASALSGGTGTTVDWALARDAVRSGEVRVARSAQGDGPVLSLNSSEALYPMPVILAGGPQPENVSEAVDTVAPWAVDVSGGVELEDGSGKDLEKVRAFVKAAKKL</sequence>
<gene>
    <name type="primary">TRPC</name>
</gene>
<proteinExistence type="inferred from homology"/>
<organism>
    <name type="scientific">Phanerodontia chrysosporium</name>
    <name type="common">White-rot fungus</name>
    <name type="synonym">Sporotrichum pruinosum</name>
    <dbReference type="NCBI Taxonomy" id="2822231"/>
    <lineage>
        <taxon>Eukaryota</taxon>
        <taxon>Fungi</taxon>
        <taxon>Dikarya</taxon>
        <taxon>Basidiomycota</taxon>
        <taxon>Agaricomycotina</taxon>
        <taxon>Agaricomycetes</taxon>
        <taxon>Polyporales</taxon>
        <taxon>Phanerochaetaceae</taxon>
        <taxon>Phanerodontia</taxon>
    </lineage>
</organism>
<comment type="function">
    <text>Trifunctional enzyme bearing the Gln amidotransferase (GATase) domain of anthranilate synthase, indole-glycerolphosphate synthase, and phosphoribosylanthranilate isomerase activities.</text>
</comment>
<comment type="catalytic activity">
    <reaction>
        <text>N-(5-phospho-beta-D-ribosyl)anthranilate = 1-(2-carboxyphenylamino)-1-deoxy-D-ribulose 5-phosphate</text>
        <dbReference type="Rhea" id="RHEA:21540"/>
        <dbReference type="ChEBI" id="CHEBI:18277"/>
        <dbReference type="ChEBI" id="CHEBI:58613"/>
        <dbReference type="EC" id="5.3.1.24"/>
    </reaction>
</comment>
<comment type="catalytic activity">
    <reaction>
        <text>1-(2-carboxyphenylamino)-1-deoxy-D-ribulose 5-phosphate + H(+) = (1S,2R)-1-C-(indol-3-yl)glycerol 3-phosphate + CO2 + H2O</text>
        <dbReference type="Rhea" id="RHEA:23476"/>
        <dbReference type="ChEBI" id="CHEBI:15377"/>
        <dbReference type="ChEBI" id="CHEBI:15378"/>
        <dbReference type="ChEBI" id="CHEBI:16526"/>
        <dbReference type="ChEBI" id="CHEBI:58613"/>
        <dbReference type="ChEBI" id="CHEBI:58866"/>
        <dbReference type="EC" id="4.1.1.48"/>
    </reaction>
</comment>
<comment type="catalytic activity">
    <reaction>
        <text>chorismate + L-glutamine = anthranilate + pyruvate + L-glutamate + H(+)</text>
        <dbReference type="Rhea" id="RHEA:21732"/>
        <dbReference type="ChEBI" id="CHEBI:15361"/>
        <dbReference type="ChEBI" id="CHEBI:15378"/>
        <dbReference type="ChEBI" id="CHEBI:16567"/>
        <dbReference type="ChEBI" id="CHEBI:29748"/>
        <dbReference type="ChEBI" id="CHEBI:29985"/>
        <dbReference type="ChEBI" id="CHEBI:58359"/>
        <dbReference type="EC" id="4.1.3.27"/>
    </reaction>
</comment>
<comment type="pathway">
    <text>Amino-acid biosynthesis; L-tryptophan biosynthesis; L-tryptophan from chorismate: step 1/5.</text>
</comment>
<comment type="pathway">
    <text>Amino-acid biosynthesis; L-tryptophan biosynthesis; L-tryptophan from chorismate: step 3/5.</text>
</comment>
<comment type="pathway">
    <text>Amino-acid biosynthesis; L-tryptophan biosynthesis; L-tryptophan from chorismate: step 4/5.</text>
</comment>
<dbReference type="EC" id="4.1.3.27"/>
<dbReference type="EC" id="4.1.1.48"/>
<dbReference type="EC" id="5.3.1.24"/>
<dbReference type="EMBL" id="X56047">
    <property type="protein sequence ID" value="CAA39518.1"/>
    <property type="molecule type" value="Genomic_DNA"/>
</dbReference>
<dbReference type="PIR" id="S15239">
    <property type="entry name" value="S15239"/>
</dbReference>
<dbReference type="SMR" id="P25170"/>
<dbReference type="VEuPathDB" id="FungiDB:AGR57_4754"/>
<dbReference type="UniPathway" id="UPA00035">
    <property type="reaction ID" value="UER00040"/>
</dbReference>
<dbReference type="UniPathway" id="UPA00035">
    <property type="reaction ID" value="UER00042"/>
</dbReference>
<dbReference type="UniPathway" id="UPA00035">
    <property type="reaction ID" value="UER00043"/>
</dbReference>
<dbReference type="GO" id="GO:0004049">
    <property type="term" value="F:anthranilate synthase activity"/>
    <property type="evidence" value="ECO:0007669"/>
    <property type="project" value="UniProtKB-EC"/>
</dbReference>
<dbReference type="GO" id="GO:0004425">
    <property type="term" value="F:indole-3-glycerol-phosphate synthase activity"/>
    <property type="evidence" value="ECO:0007669"/>
    <property type="project" value="UniProtKB-EC"/>
</dbReference>
<dbReference type="GO" id="GO:0004640">
    <property type="term" value="F:phosphoribosylanthranilate isomerase activity"/>
    <property type="evidence" value="ECO:0007669"/>
    <property type="project" value="UniProtKB-EC"/>
</dbReference>
<dbReference type="GO" id="GO:0000162">
    <property type="term" value="P:L-tryptophan biosynthetic process"/>
    <property type="evidence" value="ECO:0007669"/>
    <property type="project" value="UniProtKB-UniPathway"/>
</dbReference>
<dbReference type="CDD" id="cd01743">
    <property type="entry name" value="GATase1_Anthranilate_Synthase"/>
    <property type="match status" value="1"/>
</dbReference>
<dbReference type="CDD" id="cd00331">
    <property type="entry name" value="IGPS"/>
    <property type="match status" value="1"/>
</dbReference>
<dbReference type="CDD" id="cd00405">
    <property type="entry name" value="PRAI"/>
    <property type="match status" value="1"/>
</dbReference>
<dbReference type="FunFam" id="3.20.20.70:FF:000136">
    <property type="entry name" value="Multifunctional tryptophan biosynthesis protein"/>
    <property type="match status" value="1"/>
</dbReference>
<dbReference type="FunFam" id="3.40.50.880:FF:000031">
    <property type="entry name" value="Multifunctional tryptophan biosynthesis protein"/>
    <property type="match status" value="1"/>
</dbReference>
<dbReference type="Gene3D" id="3.40.50.880">
    <property type="match status" value="1"/>
</dbReference>
<dbReference type="Gene3D" id="3.20.20.70">
    <property type="entry name" value="Aldolase class I"/>
    <property type="match status" value="2"/>
</dbReference>
<dbReference type="HAMAP" id="MF_00134_B">
    <property type="entry name" value="IGPS_B"/>
    <property type="match status" value="1"/>
</dbReference>
<dbReference type="HAMAP" id="MF_00135">
    <property type="entry name" value="PRAI"/>
    <property type="match status" value="1"/>
</dbReference>
<dbReference type="InterPro" id="IPR013785">
    <property type="entry name" value="Aldolase_TIM"/>
</dbReference>
<dbReference type="InterPro" id="IPR016302">
    <property type="entry name" value="Anthranilate_synth_II"/>
</dbReference>
<dbReference type="InterPro" id="IPR029062">
    <property type="entry name" value="Class_I_gatase-like"/>
</dbReference>
<dbReference type="InterPro" id="IPR017926">
    <property type="entry name" value="GATASE"/>
</dbReference>
<dbReference type="InterPro" id="IPR045186">
    <property type="entry name" value="Indole-3-glycerol_P_synth"/>
</dbReference>
<dbReference type="InterPro" id="IPR013798">
    <property type="entry name" value="Indole-3-glycerol_P_synth_dom"/>
</dbReference>
<dbReference type="InterPro" id="IPR001468">
    <property type="entry name" value="Indole-3-GlycerolPSynthase_CS"/>
</dbReference>
<dbReference type="InterPro" id="IPR001240">
    <property type="entry name" value="PRAI_dom"/>
</dbReference>
<dbReference type="InterPro" id="IPR011060">
    <property type="entry name" value="RibuloseP-bd_barrel"/>
</dbReference>
<dbReference type="InterPro" id="IPR006221">
    <property type="entry name" value="TrpG/PapA_dom"/>
</dbReference>
<dbReference type="NCBIfam" id="NF001377">
    <property type="entry name" value="PRK00278.2-4"/>
    <property type="match status" value="1"/>
</dbReference>
<dbReference type="NCBIfam" id="TIGR00566">
    <property type="entry name" value="trpG_papA"/>
    <property type="match status" value="1"/>
</dbReference>
<dbReference type="PANTHER" id="PTHR22854:SF2">
    <property type="entry name" value="INDOLE-3-GLYCEROL-PHOSPHATE SYNTHASE"/>
    <property type="match status" value="1"/>
</dbReference>
<dbReference type="PANTHER" id="PTHR22854">
    <property type="entry name" value="TRYPTOPHAN BIOSYNTHESIS PROTEIN"/>
    <property type="match status" value="1"/>
</dbReference>
<dbReference type="Pfam" id="PF00117">
    <property type="entry name" value="GATase"/>
    <property type="match status" value="1"/>
</dbReference>
<dbReference type="Pfam" id="PF00218">
    <property type="entry name" value="IGPS"/>
    <property type="match status" value="1"/>
</dbReference>
<dbReference type="Pfam" id="PF00697">
    <property type="entry name" value="PRAI"/>
    <property type="match status" value="1"/>
</dbReference>
<dbReference type="PIRSF" id="PIRSF001382">
    <property type="entry name" value="TrpG-trpC-trpF"/>
    <property type="match status" value="1"/>
</dbReference>
<dbReference type="PRINTS" id="PR00097">
    <property type="entry name" value="ANTSNTHASEII"/>
</dbReference>
<dbReference type="PRINTS" id="PR00096">
    <property type="entry name" value="GATASE"/>
</dbReference>
<dbReference type="SUPFAM" id="SSF52317">
    <property type="entry name" value="Class I glutamine amidotransferase-like"/>
    <property type="match status" value="1"/>
</dbReference>
<dbReference type="SUPFAM" id="SSF51366">
    <property type="entry name" value="Ribulose-phoshate binding barrel"/>
    <property type="match status" value="2"/>
</dbReference>
<dbReference type="PROSITE" id="PS51273">
    <property type="entry name" value="GATASE_TYPE_1"/>
    <property type="match status" value="1"/>
</dbReference>
<dbReference type="PROSITE" id="PS00614">
    <property type="entry name" value="IGPS"/>
    <property type="match status" value="1"/>
</dbReference>
<keyword id="KW-0028">Amino-acid biosynthesis</keyword>
<keyword id="KW-0057">Aromatic amino acid biosynthesis</keyword>
<keyword id="KW-0210">Decarboxylase</keyword>
<keyword id="KW-0315">Glutamine amidotransferase</keyword>
<keyword id="KW-0413">Isomerase</keyword>
<keyword id="KW-0456">Lyase</keyword>
<keyword id="KW-0511">Multifunctional enzyme</keyword>
<keyword id="KW-0822">Tryptophan biosynthesis</keyword>